<sequence length="138" mass="15156">MPEKMQVLGSRKGLTPAVQNYTMVNVSDNSGAKEAMIISVFGYRGALRRVPYANVGDLVMVSVRKGAPDVRKQKFKAVVIRQRMPFRRPDGTWISFDDNAVVIVNPDGTAKGTEIRGPVAREAAERWPKVASLATLIV</sequence>
<comment type="function">
    <text evidence="1">Binds to 23S rRNA. Forms part of two intersubunit bridges in the 70S ribosome.</text>
</comment>
<comment type="subunit">
    <text evidence="1">Part of the 50S ribosomal subunit. Forms a cluster with proteins L3 and L24e, part of which may contact the 16S rRNA in 2 intersubunit bridges.</text>
</comment>
<comment type="similarity">
    <text evidence="1">Belongs to the universal ribosomal protein uL14 family.</text>
</comment>
<keyword id="KW-1185">Reference proteome</keyword>
<keyword id="KW-0687">Ribonucleoprotein</keyword>
<keyword id="KW-0689">Ribosomal protein</keyword>
<keyword id="KW-0694">RNA-binding</keyword>
<keyword id="KW-0699">rRNA-binding</keyword>
<organism>
    <name type="scientific">Metallosphaera sedula (strain ATCC 51363 / DSM 5348 / JCM 9185 / NBRC 15509 / TH2)</name>
    <dbReference type="NCBI Taxonomy" id="399549"/>
    <lineage>
        <taxon>Archaea</taxon>
        <taxon>Thermoproteota</taxon>
        <taxon>Thermoprotei</taxon>
        <taxon>Sulfolobales</taxon>
        <taxon>Sulfolobaceae</taxon>
        <taxon>Metallosphaera</taxon>
    </lineage>
</organism>
<protein>
    <recommendedName>
        <fullName evidence="1">Large ribosomal subunit protein uL14</fullName>
    </recommendedName>
    <alternativeName>
        <fullName evidence="2">50S ribosomal protein L14</fullName>
    </alternativeName>
</protein>
<proteinExistence type="inferred from homology"/>
<feature type="chain" id="PRO_0000355849" description="Large ribosomal subunit protein uL14">
    <location>
        <begin position="1"/>
        <end position="138"/>
    </location>
</feature>
<gene>
    <name evidence="1" type="primary">rpl14</name>
    <name type="ordered locus">Msed_0101</name>
</gene>
<dbReference type="EMBL" id="CP000682">
    <property type="protein sequence ID" value="ABP94278.1"/>
    <property type="molecule type" value="Genomic_DNA"/>
</dbReference>
<dbReference type="RefSeq" id="WP_011921247.1">
    <property type="nucleotide sequence ID" value="NZ_CP139956.1"/>
</dbReference>
<dbReference type="SMR" id="A4YCX6"/>
<dbReference type="STRING" id="399549.Msed_0101"/>
<dbReference type="KEGG" id="mse:Msed_0101"/>
<dbReference type="eggNOG" id="arCOG04095">
    <property type="taxonomic scope" value="Archaea"/>
</dbReference>
<dbReference type="HOGENOM" id="CLU_095071_3_0_2"/>
<dbReference type="Proteomes" id="UP000000242">
    <property type="component" value="Chromosome"/>
</dbReference>
<dbReference type="GO" id="GO:0022625">
    <property type="term" value="C:cytosolic large ribosomal subunit"/>
    <property type="evidence" value="ECO:0007669"/>
    <property type="project" value="TreeGrafter"/>
</dbReference>
<dbReference type="GO" id="GO:0070180">
    <property type="term" value="F:large ribosomal subunit rRNA binding"/>
    <property type="evidence" value="ECO:0007669"/>
    <property type="project" value="TreeGrafter"/>
</dbReference>
<dbReference type="GO" id="GO:0003735">
    <property type="term" value="F:structural constituent of ribosome"/>
    <property type="evidence" value="ECO:0007669"/>
    <property type="project" value="InterPro"/>
</dbReference>
<dbReference type="GO" id="GO:0006412">
    <property type="term" value="P:translation"/>
    <property type="evidence" value="ECO:0007669"/>
    <property type="project" value="UniProtKB-UniRule"/>
</dbReference>
<dbReference type="CDD" id="cd00337">
    <property type="entry name" value="Ribosomal_uL14"/>
    <property type="match status" value="1"/>
</dbReference>
<dbReference type="FunFam" id="2.40.150.20:FF:000007">
    <property type="entry name" value="50S ribosomal protein L14"/>
    <property type="match status" value="1"/>
</dbReference>
<dbReference type="Gene3D" id="2.40.150.20">
    <property type="entry name" value="Ribosomal protein L14"/>
    <property type="match status" value="1"/>
</dbReference>
<dbReference type="HAMAP" id="MF_01367">
    <property type="entry name" value="Ribosomal_uL14"/>
    <property type="match status" value="1"/>
</dbReference>
<dbReference type="InterPro" id="IPR000218">
    <property type="entry name" value="Ribosomal_uL14"/>
</dbReference>
<dbReference type="InterPro" id="IPR019971">
    <property type="entry name" value="Ribosomal_uL14_arc"/>
</dbReference>
<dbReference type="InterPro" id="IPR019972">
    <property type="entry name" value="Ribosomal_uL14_CS"/>
</dbReference>
<dbReference type="InterPro" id="IPR036853">
    <property type="entry name" value="Ribosomal_uL14_sf"/>
</dbReference>
<dbReference type="NCBIfam" id="NF006344">
    <property type="entry name" value="PRK08571.1"/>
    <property type="match status" value="1"/>
</dbReference>
<dbReference type="NCBIfam" id="TIGR03673">
    <property type="entry name" value="uL14_arch"/>
    <property type="match status" value="1"/>
</dbReference>
<dbReference type="PANTHER" id="PTHR11761">
    <property type="entry name" value="50S/60S RIBOSOMAL PROTEIN L14/L23"/>
    <property type="match status" value="1"/>
</dbReference>
<dbReference type="PANTHER" id="PTHR11761:SF8">
    <property type="entry name" value="LARGE RIBOSOMAL SUBUNIT PROTEIN UL14"/>
    <property type="match status" value="1"/>
</dbReference>
<dbReference type="Pfam" id="PF00238">
    <property type="entry name" value="Ribosomal_L14"/>
    <property type="match status" value="1"/>
</dbReference>
<dbReference type="SMART" id="SM01374">
    <property type="entry name" value="Ribosomal_L14"/>
    <property type="match status" value="1"/>
</dbReference>
<dbReference type="SUPFAM" id="SSF50193">
    <property type="entry name" value="Ribosomal protein L14"/>
    <property type="match status" value="1"/>
</dbReference>
<dbReference type="PROSITE" id="PS00049">
    <property type="entry name" value="RIBOSOMAL_L14"/>
    <property type="match status" value="1"/>
</dbReference>
<reference key="1">
    <citation type="journal article" date="2008" name="Appl. Environ. Microbiol.">
        <title>The genome sequence of the metal-mobilizing, extremely thermoacidophilic archaeon Metallosphaera sedula provides insights into bioleaching-associated metabolism.</title>
        <authorList>
            <person name="Auernik K.S."/>
            <person name="Maezato Y."/>
            <person name="Blum P.H."/>
            <person name="Kelly R.M."/>
        </authorList>
    </citation>
    <scope>NUCLEOTIDE SEQUENCE [LARGE SCALE GENOMIC DNA]</scope>
    <source>
        <strain>ATCC 51363 / DSM 5348 / JCM 9185 / NBRC 15509 / TH2</strain>
    </source>
</reference>
<evidence type="ECO:0000255" key="1">
    <source>
        <dbReference type="HAMAP-Rule" id="MF_01367"/>
    </source>
</evidence>
<evidence type="ECO:0000305" key="2"/>
<name>RL14_METS5</name>
<accession>A4YCX6</accession>